<sequence>MTEVTYQIQDQIKQFNNFNPIQKTNYKYQYNSDNENSSLVYLIKNPKQNNFKNYNNKICNYKRSLSSSSFQGNEEKETRKKNKAQFYENDFENGFGNISSWLNNSIPYKCEDCNGNNEPPHQKLKSQDIPLFTFFEPLTFIHEINKVIHIELEIAGVDKDDVKVDLTNNILTIVAKKKSVYPLFQNMCEFKRHEKSIGVYKRVLEFNSNTVDKDTIKARYVNGILLITVNKFL</sequence>
<feature type="chain" id="PRO_0000363892" description="Small heat shock protein hspF">
    <location>
        <begin position="1"/>
        <end position="233"/>
    </location>
</feature>
<feature type="domain" description="sHSP" evidence="1">
    <location>
        <begin position="129"/>
        <end position="233"/>
    </location>
</feature>
<comment type="induction">
    <text evidence="2">Up-regulated by phagocytic stimuli.</text>
</comment>
<comment type="similarity">
    <text evidence="1">Belongs to the small heat shock protein (HSP20) family.</text>
</comment>
<comment type="caution">
    <text evidence="3">The gene for this protein is duplicated in strains AX3 and AX4. These strains contain a duplication of a segment of 750 kb of chromosome 2 compared to the corresponding sequence in strain AX2.</text>
</comment>
<evidence type="ECO:0000255" key="1">
    <source>
        <dbReference type="PROSITE-ProRule" id="PRU00285"/>
    </source>
</evidence>
<evidence type="ECO:0000269" key="2">
    <source>
    </source>
</evidence>
<evidence type="ECO:0000305" key="3"/>
<keyword id="KW-1185">Reference proteome</keyword>
<keyword id="KW-0346">Stress response</keyword>
<dbReference type="EMBL" id="AAFI02000010">
    <property type="protein sequence ID" value="EAL70735.2"/>
    <property type="molecule type" value="Genomic_DNA"/>
</dbReference>
<dbReference type="EMBL" id="AAFI02000010">
    <property type="protein sequence ID" value="EAS66921.1"/>
    <property type="molecule type" value="Genomic_DNA"/>
</dbReference>
<dbReference type="RefSeq" id="XP_001134605.1">
    <property type="nucleotide sequence ID" value="XM_001134605.1"/>
</dbReference>
<dbReference type="RefSeq" id="XP_644663.2">
    <property type="nucleotide sequence ID" value="XM_639571.2"/>
</dbReference>
<dbReference type="SMR" id="Q1ZXL6"/>
<dbReference type="PaxDb" id="44689-DDB0232118"/>
<dbReference type="EnsemblProtists" id="EAL70735">
    <property type="protein sequence ID" value="EAL70735"/>
    <property type="gene ID" value="DDB_G0273561"/>
</dbReference>
<dbReference type="EnsemblProtists" id="EAS66921">
    <property type="protein sequence ID" value="EAS66921"/>
    <property type="gene ID" value="DDB_G0273409"/>
</dbReference>
<dbReference type="GeneID" id="8618952"/>
<dbReference type="GeneID" id="8619025"/>
<dbReference type="KEGG" id="ddi:DDB_G0273409"/>
<dbReference type="KEGG" id="ddi:DDB_G0273561"/>
<dbReference type="dictyBase" id="DDB_G0273409">
    <property type="gene designation" value="hspF-1"/>
</dbReference>
<dbReference type="dictyBase" id="DDB_G0273561">
    <property type="gene designation" value="hspF-2"/>
</dbReference>
<dbReference type="VEuPathDB" id="AmoebaDB:DDB_G0273409"/>
<dbReference type="eggNOG" id="ENOG502RIH4">
    <property type="taxonomic scope" value="Eukaryota"/>
</dbReference>
<dbReference type="HOGENOM" id="CLU_1191751_0_0_1"/>
<dbReference type="InParanoid" id="Q1ZXL6"/>
<dbReference type="PRO" id="PR:Q1ZXL6"/>
<dbReference type="Proteomes" id="UP000002195">
    <property type="component" value="Chromosome 2"/>
</dbReference>
<dbReference type="CDD" id="cd06464">
    <property type="entry name" value="ACD_sHsps-like"/>
    <property type="match status" value="1"/>
</dbReference>
<dbReference type="Gene3D" id="2.60.40.790">
    <property type="match status" value="1"/>
</dbReference>
<dbReference type="InterPro" id="IPR002068">
    <property type="entry name" value="A-crystallin/Hsp20_dom"/>
</dbReference>
<dbReference type="InterPro" id="IPR008978">
    <property type="entry name" value="HSP20-like_chaperone"/>
</dbReference>
<dbReference type="Pfam" id="PF00011">
    <property type="entry name" value="HSP20"/>
    <property type="match status" value="1"/>
</dbReference>
<dbReference type="SUPFAM" id="SSF49764">
    <property type="entry name" value="HSP20-like chaperones"/>
    <property type="match status" value="1"/>
</dbReference>
<dbReference type="PROSITE" id="PS01031">
    <property type="entry name" value="SHSP"/>
    <property type="match status" value="1"/>
</dbReference>
<name>HSPF_DICDI</name>
<accession>Q1ZXL6</accession>
<accession>Q557H2</accession>
<accession>Q8T1N9</accession>
<reference key="1">
    <citation type="journal article" date="2002" name="Nature">
        <title>Sequence and analysis of chromosome 2 of Dictyostelium discoideum.</title>
        <authorList>
            <person name="Gloeckner G."/>
            <person name="Eichinger L."/>
            <person name="Szafranski K."/>
            <person name="Pachebat J.A."/>
            <person name="Bankier A.T."/>
            <person name="Dear P.H."/>
            <person name="Lehmann R."/>
            <person name="Baumgart C."/>
            <person name="Parra G."/>
            <person name="Abril J.F."/>
            <person name="Guigo R."/>
            <person name="Kumpf K."/>
            <person name="Tunggal B."/>
            <person name="Cox E.C."/>
            <person name="Quail M.A."/>
            <person name="Platzer M."/>
            <person name="Rosenthal A."/>
            <person name="Noegel A.A."/>
        </authorList>
    </citation>
    <scope>NUCLEOTIDE SEQUENCE [LARGE SCALE GENOMIC DNA]</scope>
    <source>
        <strain>AX4</strain>
    </source>
</reference>
<reference key="2">
    <citation type="journal article" date="2005" name="Nature">
        <title>The genome of the social amoeba Dictyostelium discoideum.</title>
        <authorList>
            <person name="Eichinger L."/>
            <person name="Pachebat J.A."/>
            <person name="Gloeckner G."/>
            <person name="Rajandream M.A."/>
            <person name="Sucgang R."/>
            <person name="Berriman M."/>
            <person name="Song J."/>
            <person name="Olsen R."/>
            <person name="Szafranski K."/>
            <person name="Xu Q."/>
            <person name="Tunggal B."/>
            <person name="Kummerfeld S."/>
            <person name="Madera M."/>
            <person name="Konfortov B.A."/>
            <person name="Rivero F."/>
            <person name="Bankier A.T."/>
            <person name="Lehmann R."/>
            <person name="Hamlin N."/>
            <person name="Davies R."/>
            <person name="Gaudet P."/>
            <person name="Fey P."/>
            <person name="Pilcher K."/>
            <person name="Chen G."/>
            <person name="Saunders D."/>
            <person name="Sodergren E.J."/>
            <person name="Davis P."/>
            <person name="Kerhornou A."/>
            <person name="Nie X."/>
            <person name="Hall N."/>
            <person name="Anjard C."/>
            <person name="Hemphill L."/>
            <person name="Bason N."/>
            <person name="Farbrother P."/>
            <person name="Desany B."/>
            <person name="Just E."/>
            <person name="Morio T."/>
            <person name="Rost R."/>
            <person name="Churcher C.M."/>
            <person name="Cooper J."/>
            <person name="Haydock S."/>
            <person name="van Driessche N."/>
            <person name="Cronin A."/>
            <person name="Goodhead I."/>
            <person name="Muzny D.M."/>
            <person name="Mourier T."/>
            <person name="Pain A."/>
            <person name="Lu M."/>
            <person name="Harper D."/>
            <person name="Lindsay R."/>
            <person name="Hauser H."/>
            <person name="James K.D."/>
            <person name="Quiles M."/>
            <person name="Madan Babu M."/>
            <person name="Saito T."/>
            <person name="Buchrieser C."/>
            <person name="Wardroper A."/>
            <person name="Felder M."/>
            <person name="Thangavelu M."/>
            <person name="Johnson D."/>
            <person name="Knights A."/>
            <person name="Loulseged H."/>
            <person name="Mungall K.L."/>
            <person name="Oliver K."/>
            <person name="Price C."/>
            <person name="Quail M.A."/>
            <person name="Urushihara H."/>
            <person name="Hernandez J."/>
            <person name="Rabbinowitsch E."/>
            <person name="Steffen D."/>
            <person name="Sanders M."/>
            <person name="Ma J."/>
            <person name="Kohara Y."/>
            <person name="Sharp S."/>
            <person name="Simmonds M.N."/>
            <person name="Spiegler S."/>
            <person name="Tivey A."/>
            <person name="Sugano S."/>
            <person name="White B."/>
            <person name="Walker D."/>
            <person name="Woodward J.R."/>
            <person name="Winckler T."/>
            <person name="Tanaka Y."/>
            <person name="Shaulsky G."/>
            <person name="Schleicher M."/>
            <person name="Weinstock G.M."/>
            <person name="Rosenthal A."/>
            <person name="Cox E.C."/>
            <person name="Chisholm R.L."/>
            <person name="Gibbs R.A."/>
            <person name="Loomis W.F."/>
            <person name="Platzer M."/>
            <person name="Kay R.R."/>
            <person name="Williams J.G."/>
            <person name="Dear P.H."/>
            <person name="Noegel A.A."/>
            <person name="Barrell B.G."/>
            <person name="Kuspa A."/>
        </authorList>
    </citation>
    <scope>NUCLEOTIDE SEQUENCE [LARGE SCALE GENOMIC DNA]</scope>
    <source>
        <strain>AX4</strain>
    </source>
</reference>
<reference key="3">
    <citation type="journal article" date="2008" name="BMC Genomics">
        <title>Genome-wide transcriptional changes induced by phagocytosis or growth on bacteria in Dictyostelium.</title>
        <authorList>
            <person name="Sillo A."/>
            <person name="Bloomfield G."/>
            <person name="Balest A."/>
            <person name="Balbo A."/>
            <person name="Pergolizzi B."/>
            <person name="Peracino B."/>
            <person name="Skelton J."/>
            <person name="Ivens A."/>
            <person name="Bozzaro S."/>
        </authorList>
    </citation>
    <scope>INDUCTION [LARGE SCALE ANALYSIS]</scope>
</reference>
<protein>
    <recommendedName>
        <fullName>Small heat shock protein hspF</fullName>
    </recommendedName>
</protein>
<gene>
    <name type="primary">hspF-1</name>
    <name type="ORF">DDB_G0273409</name>
</gene>
<gene>
    <name type="primary">hspF-2</name>
    <name type="ORF">DDB_G0273561</name>
</gene>
<organism>
    <name type="scientific">Dictyostelium discoideum</name>
    <name type="common">Social amoeba</name>
    <dbReference type="NCBI Taxonomy" id="44689"/>
    <lineage>
        <taxon>Eukaryota</taxon>
        <taxon>Amoebozoa</taxon>
        <taxon>Evosea</taxon>
        <taxon>Eumycetozoa</taxon>
        <taxon>Dictyostelia</taxon>
        <taxon>Dictyosteliales</taxon>
        <taxon>Dictyosteliaceae</taxon>
        <taxon>Dictyostelium</taxon>
    </lineage>
</organism>
<proteinExistence type="evidence at transcript level"/>